<accession>B2T5R7</accession>
<comment type="function">
    <text evidence="1">Could be a mediator in iron transactions between iron acquisition and iron-requiring processes, such as synthesis and/or repair of Fe-S clusters in biosynthetic enzymes.</text>
</comment>
<comment type="similarity">
    <text evidence="1">Belongs to the Fe(2+)-trafficking protein family.</text>
</comment>
<keyword id="KW-0408">Iron</keyword>
<proteinExistence type="inferred from homology"/>
<feature type="chain" id="PRO_1000131833" description="Probable Fe(2+)-trafficking protein">
    <location>
        <begin position="1"/>
        <end position="91"/>
    </location>
</feature>
<gene>
    <name type="ordered locus">Bphyt_2624</name>
</gene>
<dbReference type="EMBL" id="CP001052">
    <property type="protein sequence ID" value="ACD17019.1"/>
    <property type="molecule type" value="Genomic_DNA"/>
</dbReference>
<dbReference type="SMR" id="B2T5R7"/>
<dbReference type="STRING" id="398527.Bphyt_2624"/>
<dbReference type="KEGG" id="bpy:Bphyt_2624"/>
<dbReference type="eggNOG" id="COG2924">
    <property type="taxonomic scope" value="Bacteria"/>
</dbReference>
<dbReference type="HOGENOM" id="CLU_170994_0_0_4"/>
<dbReference type="OrthoDB" id="9804318at2"/>
<dbReference type="Proteomes" id="UP000001739">
    <property type="component" value="Chromosome 1"/>
</dbReference>
<dbReference type="GO" id="GO:0005829">
    <property type="term" value="C:cytosol"/>
    <property type="evidence" value="ECO:0007669"/>
    <property type="project" value="TreeGrafter"/>
</dbReference>
<dbReference type="GO" id="GO:0005506">
    <property type="term" value="F:iron ion binding"/>
    <property type="evidence" value="ECO:0007669"/>
    <property type="project" value="UniProtKB-UniRule"/>
</dbReference>
<dbReference type="GO" id="GO:0034599">
    <property type="term" value="P:cellular response to oxidative stress"/>
    <property type="evidence" value="ECO:0007669"/>
    <property type="project" value="TreeGrafter"/>
</dbReference>
<dbReference type="FunFam" id="1.10.3880.10:FF:000001">
    <property type="entry name" value="Probable Fe(2+)-trafficking protein"/>
    <property type="match status" value="1"/>
</dbReference>
<dbReference type="Gene3D" id="1.10.3880.10">
    <property type="entry name" value="Fe(II) trafficking protein YggX"/>
    <property type="match status" value="1"/>
</dbReference>
<dbReference type="HAMAP" id="MF_00686">
    <property type="entry name" value="Fe_traffic_YggX"/>
    <property type="match status" value="1"/>
</dbReference>
<dbReference type="InterPro" id="IPR007457">
    <property type="entry name" value="Fe_traffick_prot_YggX"/>
</dbReference>
<dbReference type="InterPro" id="IPR036766">
    <property type="entry name" value="Fe_traffick_prot_YggX_sf"/>
</dbReference>
<dbReference type="NCBIfam" id="NF003817">
    <property type="entry name" value="PRK05408.1"/>
    <property type="match status" value="1"/>
</dbReference>
<dbReference type="PANTHER" id="PTHR36965">
    <property type="entry name" value="FE(2+)-TRAFFICKING PROTEIN-RELATED"/>
    <property type="match status" value="1"/>
</dbReference>
<dbReference type="PANTHER" id="PTHR36965:SF1">
    <property type="entry name" value="FE(2+)-TRAFFICKING PROTEIN-RELATED"/>
    <property type="match status" value="1"/>
</dbReference>
<dbReference type="Pfam" id="PF04362">
    <property type="entry name" value="Iron_traffic"/>
    <property type="match status" value="1"/>
</dbReference>
<dbReference type="PIRSF" id="PIRSF029827">
    <property type="entry name" value="Fe_traffic_YggX"/>
    <property type="match status" value="1"/>
</dbReference>
<dbReference type="SUPFAM" id="SSF111148">
    <property type="entry name" value="YggX-like"/>
    <property type="match status" value="1"/>
</dbReference>
<sequence length="91" mass="10353">MTRMVQCAKLGKEAEGLDFPPLPGELGKRIYEGISKEAWQAWLKQQTMLINENRLNMADPRARQYLMKQTEKFFFGEGADTAQGYVPPSAE</sequence>
<protein>
    <recommendedName>
        <fullName evidence="1">Probable Fe(2+)-trafficking protein</fullName>
    </recommendedName>
</protein>
<reference key="1">
    <citation type="journal article" date="2011" name="J. Bacteriol.">
        <title>Complete genome sequence of the plant growth-promoting endophyte Burkholderia phytofirmans strain PsJN.</title>
        <authorList>
            <person name="Weilharter A."/>
            <person name="Mitter B."/>
            <person name="Shin M.V."/>
            <person name="Chain P.S."/>
            <person name="Nowak J."/>
            <person name="Sessitsch A."/>
        </authorList>
    </citation>
    <scope>NUCLEOTIDE SEQUENCE [LARGE SCALE GENOMIC DNA]</scope>
    <source>
        <strain>DSM 17436 / LMG 22146 / PsJN</strain>
    </source>
</reference>
<evidence type="ECO:0000255" key="1">
    <source>
        <dbReference type="HAMAP-Rule" id="MF_00686"/>
    </source>
</evidence>
<organism>
    <name type="scientific">Paraburkholderia phytofirmans (strain DSM 17436 / LMG 22146 / PsJN)</name>
    <name type="common">Burkholderia phytofirmans</name>
    <dbReference type="NCBI Taxonomy" id="398527"/>
    <lineage>
        <taxon>Bacteria</taxon>
        <taxon>Pseudomonadati</taxon>
        <taxon>Pseudomonadota</taxon>
        <taxon>Betaproteobacteria</taxon>
        <taxon>Burkholderiales</taxon>
        <taxon>Burkholderiaceae</taxon>
        <taxon>Paraburkholderia</taxon>
    </lineage>
</organism>
<name>FETP_PARPJ</name>